<accession>Q8CXC4</accession>
<sequence>MNPITYELIKTDKQTGARLGRVHTPHGSFDTPTFMPVGTLATVKTMSPEDLQSMQANIILSNTYHLWLRPGEDIIREAGGLHKFMNWDGAILTDSGGFQVFSLSDMREIKEEGVHFRNHLNGEKLFLSPEKAMDIQNALGSDIMMAFDECPPYPAEYDYMKASVERTSRWAERCLQAHNRPHDQGLFGIVQGGEYEALRKQSAEDLVSLDFPGYAIGGLSVGEPKHVMNKVLEFTTPFLPSNKPRYLMGVGSPDALIDGAIRGVDMFDCVLPTRIARNGTCMTSNGRLVVRNAKYARDFNPIDEHCSCHVCKNYSRAYIRHLIKCNETFGFRLTTYHNLHFLLKLMEQVRTAIKEDRLGDFKESFFEQYGLNKANPKNF</sequence>
<evidence type="ECO:0000255" key="1">
    <source>
        <dbReference type="HAMAP-Rule" id="MF_00168"/>
    </source>
</evidence>
<protein>
    <recommendedName>
        <fullName evidence="1">Queuine tRNA-ribosyltransferase</fullName>
        <ecNumber evidence="1">2.4.2.29</ecNumber>
    </recommendedName>
    <alternativeName>
        <fullName evidence="1">Guanine insertion enzyme</fullName>
    </alternativeName>
    <alternativeName>
        <fullName evidence="1">tRNA-guanine transglycosylase</fullName>
    </alternativeName>
</protein>
<proteinExistence type="inferred from homology"/>
<gene>
    <name evidence="1" type="primary">tgt</name>
    <name type="ordered locus">OB2033</name>
</gene>
<feature type="chain" id="PRO_0000135498" description="Queuine tRNA-ribosyltransferase">
    <location>
        <begin position="1"/>
        <end position="379"/>
    </location>
</feature>
<feature type="region of interest" description="RNA binding" evidence="1">
    <location>
        <begin position="249"/>
        <end position="255"/>
    </location>
</feature>
<feature type="region of interest" description="RNA binding; important for wobble base 34 recognition" evidence="1">
    <location>
        <begin position="273"/>
        <end position="277"/>
    </location>
</feature>
<feature type="active site" description="Proton acceptor" evidence="1">
    <location>
        <position position="94"/>
    </location>
</feature>
<feature type="active site" description="Nucleophile" evidence="1">
    <location>
        <position position="268"/>
    </location>
</feature>
<feature type="binding site" evidence="1">
    <location>
        <begin position="94"/>
        <end position="98"/>
    </location>
    <ligand>
        <name>substrate</name>
    </ligand>
</feature>
<feature type="binding site" evidence="1">
    <location>
        <position position="148"/>
    </location>
    <ligand>
        <name>substrate</name>
    </ligand>
</feature>
<feature type="binding site" evidence="1">
    <location>
        <position position="191"/>
    </location>
    <ligand>
        <name>substrate</name>
    </ligand>
</feature>
<feature type="binding site" evidence="1">
    <location>
        <position position="218"/>
    </location>
    <ligand>
        <name>substrate</name>
    </ligand>
</feature>
<feature type="binding site" evidence="1">
    <location>
        <position position="306"/>
    </location>
    <ligand>
        <name>Zn(2+)</name>
        <dbReference type="ChEBI" id="CHEBI:29105"/>
    </ligand>
</feature>
<feature type="binding site" evidence="1">
    <location>
        <position position="308"/>
    </location>
    <ligand>
        <name>Zn(2+)</name>
        <dbReference type="ChEBI" id="CHEBI:29105"/>
    </ligand>
</feature>
<feature type="binding site" evidence="1">
    <location>
        <position position="311"/>
    </location>
    <ligand>
        <name>Zn(2+)</name>
        <dbReference type="ChEBI" id="CHEBI:29105"/>
    </ligand>
</feature>
<feature type="binding site" evidence="1">
    <location>
        <position position="337"/>
    </location>
    <ligand>
        <name>Zn(2+)</name>
        <dbReference type="ChEBI" id="CHEBI:29105"/>
    </ligand>
</feature>
<organism>
    <name type="scientific">Oceanobacillus iheyensis (strain DSM 14371 / CIP 107618 / JCM 11309 / KCTC 3954 / HTE831)</name>
    <dbReference type="NCBI Taxonomy" id="221109"/>
    <lineage>
        <taxon>Bacteria</taxon>
        <taxon>Bacillati</taxon>
        <taxon>Bacillota</taxon>
        <taxon>Bacilli</taxon>
        <taxon>Bacillales</taxon>
        <taxon>Bacillaceae</taxon>
        <taxon>Oceanobacillus</taxon>
    </lineage>
</organism>
<reference key="1">
    <citation type="journal article" date="2002" name="Nucleic Acids Res.">
        <title>Genome sequence of Oceanobacillus iheyensis isolated from the Iheya Ridge and its unexpected adaptive capabilities to extreme environments.</title>
        <authorList>
            <person name="Takami H."/>
            <person name="Takaki Y."/>
            <person name="Uchiyama I."/>
        </authorList>
    </citation>
    <scope>NUCLEOTIDE SEQUENCE [LARGE SCALE GENOMIC DNA]</scope>
    <source>
        <strain>DSM 14371 / CIP 107618 / JCM 11309 / KCTC 3954 / HTE831</strain>
    </source>
</reference>
<comment type="function">
    <text evidence="1">Catalyzes the base-exchange of a guanine (G) residue with the queuine precursor 7-aminomethyl-7-deazaguanine (PreQ1) at position 34 (anticodon wobble position) in tRNAs with GU(N) anticodons (tRNA-Asp, -Asn, -His and -Tyr). Catalysis occurs through a double-displacement mechanism. The nucleophile active site attacks the C1' of nucleotide 34 to detach the guanine base from the RNA, forming a covalent enzyme-RNA intermediate. The proton acceptor active site deprotonates the incoming PreQ1, allowing a nucleophilic attack on the C1' of the ribose to form the product. After dissociation, two additional enzymatic reactions on the tRNA convert PreQ1 to queuine (Q), resulting in the hypermodified nucleoside queuosine (7-(((4,5-cis-dihydroxy-2-cyclopenten-1-yl)amino)methyl)-7-deazaguanosine).</text>
</comment>
<comment type="catalytic activity">
    <reaction evidence="1">
        <text>7-aminomethyl-7-carbaguanine + guanosine(34) in tRNA = 7-aminomethyl-7-carbaguanosine(34) in tRNA + guanine</text>
        <dbReference type="Rhea" id="RHEA:24104"/>
        <dbReference type="Rhea" id="RHEA-COMP:10341"/>
        <dbReference type="Rhea" id="RHEA-COMP:10342"/>
        <dbReference type="ChEBI" id="CHEBI:16235"/>
        <dbReference type="ChEBI" id="CHEBI:58703"/>
        <dbReference type="ChEBI" id="CHEBI:74269"/>
        <dbReference type="ChEBI" id="CHEBI:82833"/>
        <dbReference type="EC" id="2.4.2.29"/>
    </reaction>
</comment>
<comment type="cofactor">
    <cofactor evidence="1">
        <name>Zn(2+)</name>
        <dbReference type="ChEBI" id="CHEBI:29105"/>
    </cofactor>
    <text evidence="1">Binds 1 zinc ion per subunit.</text>
</comment>
<comment type="pathway">
    <text evidence="1">tRNA modification; tRNA-queuosine biosynthesis.</text>
</comment>
<comment type="subunit">
    <text evidence="1">Homodimer. Within each dimer, one monomer is responsible for RNA recognition and catalysis, while the other monomer binds to the replacement base PreQ1.</text>
</comment>
<comment type="similarity">
    <text evidence="1">Belongs to the queuine tRNA-ribosyltransferase family.</text>
</comment>
<keyword id="KW-0328">Glycosyltransferase</keyword>
<keyword id="KW-0479">Metal-binding</keyword>
<keyword id="KW-0671">Queuosine biosynthesis</keyword>
<keyword id="KW-1185">Reference proteome</keyword>
<keyword id="KW-0808">Transferase</keyword>
<keyword id="KW-0819">tRNA processing</keyword>
<keyword id="KW-0862">Zinc</keyword>
<dbReference type="EC" id="2.4.2.29" evidence="1"/>
<dbReference type="EMBL" id="BA000028">
    <property type="protein sequence ID" value="BAC13989.1"/>
    <property type="molecule type" value="Genomic_DNA"/>
</dbReference>
<dbReference type="RefSeq" id="WP_011066428.1">
    <property type="nucleotide sequence ID" value="NC_004193.1"/>
</dbReference>
<dbReference type="SMR" id="Q8CXC4"/>
<dbReference type="STRING" id="221109.gene:10734279"/>
<dbReference type="KEGG" id="oih:OB2033"/>
<dbReference type="eggNOG" id="COG0343">
    <property type="taxonomic scope" value="Bacteria"/>
</dbReference>
<dbReference type="HOGENOM" id="CLU_022060_0_1_9"/>
<dbReference type="OrthoDB" id="9805417at2"/>
<dbReference type="PhylomeDB" id="Q8CXC4"/>
<dbReference type="UniPathway" id="UPA00392"/>
<dbReference type="Proteomes" id="UP000000822">
    <property type="component" value="Chromosome"/>
</dbReference>
<dbReference type="GO" id="GO:0005829">
    <property type="term" value="C:cytosol"/>
    <property type="evidence" value="ECO:0007669"/>
    <property type="project" value="TreeGrafter"/>
</dbReference>
<dbReference type="GO" id="GO:0046872">
    <property type="term" value="F:metal ion binding"/>
    <property type="evidence" value="ECO:0007669"/>
    <property type="project" value="UniProtKB-KW"/>
</dbReference>
<dbReference type="GO" id="GO:0008479">
    <property type="term" value="F:tRNA-guanosine(34) queuine transglycosylase activity"/>
    <property type="evidence" value="ECO:0007669"/>
    <property type="project" value="UniProtKB-UniRule"/>
</dbReference>
<dbReference type="GO" id="GO:0008616">
    <property type="term" value="P:queuosine biosynthetic process"/>
    <property type="evidence" value="ECO:0007669"/>
    <property type="project" value="UniProtKB-UniRule"/>
</dbReference>
<dbReference type="GO" id="GO:0002099">
    <property type="term" value="P:tRNA wobble guanine modification"/>
    <property type="evidence" value="ECO:0007669"/>
    <property type="project" value="TreeGrafter"/>
</dbReference>
<dbReference type="GO" id="GO:0101030">
    <property type="term" value="P:tRNA-guanine transglycosylation"/>
    <property type="evidence" value="ECO:0007669"/>
    <property type="project" value="InterPro"/>
</dbReference>
<dbReference type="FunFam" id="3.20.20.105:FF:000001">
    <property type="entry name" value="Queuine tRNA-ribosyltransferase"/>
    <property type="match status" value="1"/>
</dbReference>
<dbReference type="Gene3D" id="3.20.20.105">
    <property type="entry name" value="Queuine tRNA-ribosyltransferase-like"/>
    <property type="match status" value="1"/>
</dbReference>
<dbReference type="HAMAP" id="MF_00168">
    <property type="entry name" value="Q_tRNA_Tgt"/>
    <property type="match status" value="1"/>
</dbReference>
<dbReference type="InterPro" id="IPR050076">
    <property type="entry name" value="ArchSynthase1/Queuine_TRR"/>
</dbReference>
<dbReference type="InterPro" id="IPR004803">
    <property type="entry name" value="TGT"/>
</dbReference>
<dbReference type="InterPro" id="IPR036511">
    <property type="entry name" value="TGT-like_sf"/>
</dbReference>
<dbReference type="InterPro" id="IPR002616">
    <property type="entry name" value="tRNA_ribo_trans-like"/>
</dbReference>
<dbReference type="NCBIfam" id="TIGR00430">
    <property type="entry name" value="Q_tRNA_tgt"/>
    <property type="match status" value="1"/>
</dbReference>
<dbReference type="NCBIfam" id="TIGR00449">
    <property type="entry name" value="tgt_general"/>
    <property type="match status" value="1"/>
</dbReference>
<dbReference type="PANTHER" id="PTHR46499">
    <property type="entry name" value="QUEUINE TRNA-RIBOSYLTRANSFERASE"/>
    <property type="match status" value="1"/>
</dbReference>
<dbReference type="PANTHER" id="PTHR46499:SF1">
    <property type="entry name" value="QUEUINE TRNA-RIBOSYLTRANSFERASE"/>
    <property type="match status" value="1"/>
</dbReference>
<dbReference type="Pfam" id="PF01702">
    <property type="entry name" value="TGT"/>
    <property type="match status" value="1"/>
</dbReference>
<dbReference type="SUPFAM" id="SSF51713">
    <property type="entry name" value="tRNA-guanine transglycosylase"/>
    <property type="match status" value="1"/>
</dbReference>
<name>TGT_OCEIH</name>